<comment type="function">
    <text evidence="1">Catalyzes a reversible aldol reaction between acetaldehyde and D-glyceraldehyde 3-phosphate to generate 2-deoxy-D-ribose 5-phosphate.</text>
</comment>
<comment type="catalytic activity">
    <reaction evidence="1">
        <text>2-deoxy-D-ribose 5-phosphate = D-glyceraldehyde 3-phosphate + acetaldehyde</text>
        <dbReference type="Rhea" id="RHEA:12821"/>
        <dbReference type="ChEBI" id="CHEBI:15343"/>
        <dbReference type="ChEBI" id="CHEBI:59776"/>
        <dbReference type="ChEBI" id="CHEBI:62877"/>
        <dbReference type="EC" id="4.1.2.4"/>
    </reaction>
</comment>
<comment type="pathway">
    <text evidence="1">Carbohydrate degradation; 2-deoxy-D-ribose 1-phosphate degradation; D-glyceraldehyde 3-phosphate and acetaldehyde from 2-deoxy-alpha-D-ribose 1-phosphate: step 2/2.</text>
</comment>
<comment type="subcellular location">
    <subcellularLocation>
        <location evidence="1">Cytoplasm</location>
    </subcellularLocation>
</comment>
<comment type="similarity">
    <text evidence="1">Belongs to the DeoC/FbaB aldolase family. DeoC type 1 subfamily.</text>
</comment>
<gene>
    <name evidence="1" type="primary">deoC</name>
    <name type="ordered locus">SUB0952</name>
</gene>
<name>DEOC_STRU0</name>
<organism>
    <name type="scientific">Streptococcus uberis (strain ATCC BAA-854 / 0140J)</name>
    <dbReference type="NCBI Taxonomy" id="218495"/>
    <lineage>
        <taxon>Bacteria</taxon>
        <taxon>Bacillati</taxon>
        <taxon>Bacillota</taxon>
        <taxon>Bacilli</taxon>
        <taxon>Lactobacillales</taxon>
        <taxon>Streptococcaceae</taxon>
        <taxon>Streptococcus</taxon>
    </lineage>
</organism>
<accession>B9DS93</accession>
<proteinExistence type="inferred from homology"/>
<evidence type="ECO:0000255" key="1">
    <source>
        <dbReference type="HAMAP-Rule" id="MF_00114"/>
    </source>
</evidence>
<reference key="1">
    <citation type="journal article" date="2009" name="BMC Genomics">
        <title>Evidence for niche adaptation in the genome of the bovine pathogen Streptococcus uberis.</title>
        <authorList>
            <person name="Ward P.N."/>
            <person name="Holden M.T.G."/>
            <person name="Leigh J.A."/>
            <person name="Lennard N."/>
            <person name="Bignell A."/>
            <person name="Barron A."/>
            <person name="Clark L."/>
            <person name="Quail M.A."/>
            <person name="Woodward J."/>
            <person name="Barrell B.G."/>
            <person name="Egan S.A."/>
            <person name="Field T.R."/>
            <person name="Maskell D."/>
            <person name="Kehoe M."/>
            <person name="Dowson C.G."/>
            <person name="Chanter N."/>
            <person name="Whatmore A.M."/>
            <person name="Bentley S.D."/>
            <person name="Parkhill J."/>
        </authorList>
    </citation>
    <scope>NUCLEOTIDE SEQUENCE [LARGE SCALE GENOMIC DNA]</scope>
    <source>
        <strain>ATCC BAA-854 / 0140J</strain>
    </source>
</reference>
<feature type="chain" id="PRO_1000189839" description="Deoxyribose-phosphate aldolase">
    <location>
        <begin position="1"/>
        <end position="220"/>
    </location>
</feature>
<feature type="active site" description="Proton donor/acceptor" evidence="1">
    <location>
        <position position="89"/>
    </location>
</feature>
<feature type="active site" description="Schiff-base intermediate with acetaldehyde" evidence="1">
    <location>
        <position position="151"/>
    </location>
</feature>
<feature type="active site" description="Proton donor/acceptor" evidence="1">
    <location>
        <position position="180"/>
    </location>
</feature>
<sequence>MKINKYIDHTLLKADSVQSQIDQLLSEAKTHEFASVCVNPGWVSYCAEALKGSDVKVCTVVGFPLGATTPETKAFETKNAIENGADEIDMVLNIGKLKQGDYQAVEDDVRAVVEASGDKLVKVIIEACLLTDDEKIKACQLSVAAGADFVKTSTGFSTGGATISDVKLMRQTVGPEIGVKAAGGARSLEDALAFIEAGATRIGTSAGVKIINGEAVKGGY</sequence>
<dbReference type="EC" id="4.1.2.4" evidence="1"/>
<dbReference type="EMBL" id="AM946015">
    <property type="protein sequence ID" value="CAR42118.1"/>
    <property type="molecule type" value="Genomic_DNA"/>
</dbReference>
<dbReference type="RefSeq" id="WP_012658451.1">
    <property type="nucleotide sequence ID" value="NC_012004.1"/>
</dbReference>
<dbReference type="SMR" id="B9DS93"/>
<dbReference type="STRING" id="218495.SUB0952"/>
<dbReference type="GeneID" id="93826227"/>
<dbReference type="KEGG" id="sub:SUB0952"/>
<dbReference type="eggNOG" id="COG0274">
    <property type="taxonomic scope" value="Bacteria"/>
</dbReference>
<dbReference type="HOGENOM" id="CLU_053595_0_1_9"/>
<dbReference type="OrthoDB" id="9778711at2"/>
<dbReference type="UniPathway" id="UPA00002">
    <property type="reaction ID" value="UER00468"/>
</dbReference>
<dbReference type="Proteomes" id="UP000000449">
    <property type="component" value="Chromosome"/>
</dbReference>
<dbReference type="GO" id="GO:0005737">
    <property type="term" value="C:cytoplasm"/>
    <property type="evidence" value="ECO:0007669"/>
    <property type="project" value="UniProtKB-SubCell"/>
</dbReference>
<dbReference type="GO" id="GO:0004139">
    <property type="term" value="F:deoxyribose-phosphate aldolase activity"/>
    <property type="evidence" value="ECO:0007669"/>
    <property type="project" value="UniProtKB-UniRule"/>
</dbReference>
<dbReference type="GO" id="GO:0006018">
    <property type="term" value="P:2-deoxyribose 1-phosphate catabolic process"/>
    <property type="evidence" value="ECO:0007669"/>
    <property type="project" value="UniProtKB-UniRule"/>
</dbReference>
<dbReference type="GO" id="GO:0016052">
    <property type="term" value="P:carbohydrate catabolic process"/>
    <property type="evidence" value="ECO:0007669"/>
    <property type="project" value="TreeGrafter"/>
</dbReference>
<dbReference type="GO" id="GO:0009264">
    <property type="term" value="P:deoxyribonucleotide catabolic process"/>
    <property type="evidence" value="ECO:0007669"/>
    <property type="project" value="InterPro"/>
</dbReference>
<dbReference type="CDD" id="cd00959">
    <property type="entry name" value="DeoC"/>
    <property type="match status" value="1"/>
</dbReference>
<dbReference type="FunFam" id="3.20.20.70:FF:000044">
    <property type="entry name" value="Deoxyribose-phosphate aldolase"/>
    <property type="match status" value="1"/>
</dbReference>
<dbReference type="Gene3D" id="3.20.20.70">
    <property type="entry name" value="Aldolase class I"/>
    <property type="match status" value="1"/>
</dbReference>
<dbReference type="HAMAP" id="MF_00114">
    <property type="entry name" value="DeoC_type1"/>
    <property type="match status" value="1"/>
</dbReference>
<dbReference type="InterPro" id="IPR013785">
    <property type="entry name" value="Aldolase_TIM"/>
</dbReference>
<dbReference type="InterPro" id="IPR011343">
    <property type="entry name" value="DeoC"/>
</dbReference>
<dbReference type="InterPro" id="IPR002915">
    <property type="entry name" value="DeoC/FbaB/LacD_aldolase"/>
</dbReference>
<dbReference type="InterPro" id="IPR028581">
    <property type="entry name" value="DeoC_typeI"/>
</dbReference>
<dbReference type="NCBIfam" id="TIGR00126">
    <property type="entry name" value="deoC"/>
    <property type="match status" value="1"/>
</dbReference>
<dbReference type="PANTHER" id="PTHR10889">
    <property type="entry name" value="DEOXYRIBOSE-PHOSPHATE ALDOLASE"/>
    <property type="match status" value="1"/>
</dbReference>
<dbReference type="PANTHER" id="PTHR10889:SF1">
    <property type="entry name" value="DEOXYRIBOSE-PHOSPHATE ALDOLASE"/>
    <property type="match status" value="1"/>
</dbReference>
<dbReference type="Pfam" id="PF01791">
    <property type="entry name" value="DeoC"/>
    <property type="match status" value="1"/>
</dbReference>
<dbReference type="PIRSF" id="PIRSF001357">
    <property type="entry name" value="DeoC"/>
    <property type="match status" value="1"/>
</dbReference>
<dbReference type="SMART" id="SM01133">
    <property type="entry name" value="DeoC"/>
    <property type="match status" value="1"/>
</dbReference>
<dbReference type="SUPFAM" id="SSF51569">
    <property type="entry name" value="Aldolase"/>
    <property type="match status" value="1"/>
</dbReference>
<protein>
    <recommendedName>
        <fullName evidence="1">Deoxyribose-phosphate aldolase</fullName>
        <shortName evidence="1">DERA</shortName>
        <ecNumber evidence="1">4.1.2.4</ecNumber>
    </recommendedName>
    <alternativeName>
        <fullName evidence="1">2-deoxy-D-ribose 5-phosphate aldolase</fullName>
    </alternativeName>
    <alternativeName>
        <fullName evidence="1">Phosphodeoxyriboaldolase</fullName>
        <shortName evidence="1">Deoxyriboaldolase</shortName>
    </alternativeName>
</protein>
<keyword id="KW-0963">Cytoplasm</keyword>
<keyword id="KW-0456">Lyase</keyword>
<keyword id="KW-1185">Reference proteome</keyword>
<keyword id="KW-0704">Schiff base</keyword>